<accession>A4G9U6</accession>
<reference key="1">
    <citation type="journal article" date="2007" name="PLoS Genet.">
        <title>A tale of two oxidation states: bacterial colonization of arsenic-rich environments.</title>
        <authorList>
            <person name="Muller D."/>
            <person name="Medigue C."/>
            <person name="Koechler S."/>
            <person name="Barbe V."/>
            <person name="Barakat M."/>
            <person name="Talla E."/>
            <person name="Bonnefoy V."/>
            <person name="Krin E."/>
            <person name="Arsene-Ploetze F."/>
            <person name="Carapito C."/>
            <person name="Chandler M."/>
            <person name="Cournoyer B."/>
            <person name="Cruveiller S."/>
            <person name="Dossat C."/>
            <person name="Duval S."/>
            <person name="Heymann M."/>
            <person name="Leize E."/>
            <person name="Lieutaud A."/>
            <person name="Lievremont D."/>
            <person name="Makita Y."/>
            <person name="Mangenot S."/>
            <person name="Nitschke W."/>
            <person name="Ortet P."/>
            <person name="Perdrial N."/>
            <person name="Schoepp B."/>
            <person name="Siguier P."/>
            <person name="Simeonova D.D."/>
            <person name="Rouy Z."/>
            <person name="Segurens B."/>
            <person name="Turlin E."/>
            <person name="Vallenet D."/>
            <person name="van Dorsselaer A."/>
            <person name="Weiss S."/>
            <person name="Weissenbach J."/>
            <person name="Lett M.-C."/>
            <person name="Danchin A."/>
            <person name="Bertin P.N."/>
        </authorList>
    </citation>
    <scope>NUCLEOTIDE SEQUENCE [LARGE SCALE GENOMIC DNA]</scope>
    <source>
        <strain>ULPAs1</strain>
    </source>
</reference>
<protein>
    <recommendedName>
        <fullName evidence="1">Large ribosomal subunit protein bL12</fullName>
    </recommendedName>
    <alternativeName>
        <fullName evidence="2">50S ribosomal protein L7/L12</fullName>
    </alternativeName>
</protein>
<feature type="chain" id="PRO_1000007021" description="Large ribosomal subunit protein bL12">
    <location>
        <begin position="1"/>
        <end position="124"/>
    </location>
</feature>
<name>RL7_HERAR</name>
<proteinExistence type="inferred from homology"/>
<sequence length="124" mass="12578">MAISKDDILEAVGNLTVLELNDLVKAFEEKFGVSAAAMAAPAAGGAAGGAAAEEQTEFTVILADFGANKVGVIKAVREITGLGLKEAKDLVDAAPKPLKEGVSKADAEAAKKKLEEAGAKAEIK</sequence>
<dbReference type="EMBL" id="CU207211">
    <property type="protein sequence ID" value="CAL63283.1"/>
    <property type="molecule type" value="Genomic_DNA"/>
</dbReference>
<dbReference type="SMR" id="A4G9U6"/>
<dbReference type="STRING" id="204773.HEAR3174"/>
<dbReference type="KEGG" id="har:HEAR3174"/>
<dbReference type="eggNOG" id="COG0222">
    <property type="taxonomic scope" value="Bacteria"/>
</dbReference>
<dbReference type="HOGENOM" id="CLU_086499_3_2_4"/>
<dbReference type="OrthoDB" id="9811748at2"/>
<dbReference type="Proteomes" id="UP000006697">
    <property type="component" value="Chromosome"/>
</dbReference>
<dbReference type="GO" id="GO:0022625">
    <property type="term" value="C:cytosolic large ribosomal subunit"/>
    <property type="evidence" value="ECO:0007669"/>
    <property type="project" value="TreeGrafter"/>
</dbReference>
<dbReference type="GO" id="GO:0003729">
    <property type="term" value="F:mRNA binding"/>
    <property type="evidence" value="ECO:0007669"/>
    <property type="project" value="TreeGrafter"/>
</dbReference>
<dbReference type="GO" id="GO:0003735">
    <property type="term" value="F:structural constituent of ribosome"/>
    <property type="evidence" value="ECO:0007669"/>
    <property type="project" value="InterPro"/>
</dbReference>
<dbReference type="GO" id="GO:0006412">
    <property type="term" value="P:translation"/>
    <property type="evidence" value="ECO:0007669"/>
    <property type="project" value="UniProtKB-UniRule"/>
</dbReference>
<dbReference type="CDD" id="cd00387">
    <property type="entry name" value="Ribosomal_L7_L12"/>
    <property type="match status" value="1"/>
</dbReference>
<dbReference type="FunFam" id="3.30.1390.10:FF:000001">
    <property type="entry name" value="50S ribosomal protein L7/L12"/>
    <property type="match status" value="1"/>
</dbReference>
<dbReference type="Gene3D" id="3.30.1390.10">
    <property type="match status" value="1"/>
</dbReference>
<dbReference type="Gene3D" id="1.20.5.710">
    <property type="entry name" value="Single helix bin"/>
    <property type="match status" value="1"/>
</dbReference>
<dbReference type="HAMAP" id="MF_00368">
    <property type="entry name" value="Ribosomal_bL12"/>
    <property type="match status" value="1"/>
</dbReference>
<dbReference type="InterPro" id="IPR000206">
    <property type="entry name" value="Ribosomal_bL12"/>
</dbReference>
<dbReference type="InterPro" id="IPR013823">
    <property type="entry name" value="Ribosomal_bL12_C"/>
</dbReference>
<dbReference type="InterPro" id="IPR014719">
    <property type="entry name" value="Ribosomal_bL12_C/ClpS-like"/>
</dbReference>
<dbReference type="InterPro" id="IPR008932">
    <property type="entry name" value="Ribosomal_bL12_oligo"/>
</dbReference>
<dbReference type="InterPro" id="IPR036235">
    <property type="entry name" value="Ribosomal_bL12_oligo_N_sf"/>
</dbReference>
<dbReference type="NCBIfam" id="TIGR00855">
    <property type="entry name" value="L12"/>
    <property type="match status" value="1"/>
</dbReference>
<dbReference type="PANTHER" id="PTHR45987">
    <property type="entry name" value="39S RIBOSOMAL PROTEIN L12"/>
    <property type="match status" value="1"/>
</dbReference>
<dbReference type="PANTHER" id="PTHR45987:SF4">
    <property type="entry name" value="LARGE RIBOSOMAL SUBUNIT PROTEIN BL12M"/>
    <property type="match status" value="1"/>
</dbReference>
<dbReference type="Pfam" id="PF00542">
    <property type="entry name" value="Ribosomal_L12"/>
    <property type="match status" value="1"/>
</dbReference>
<dbReference type="Pfam" id="PF16320">
    <property type="entry name" value="Ribosomal_L12_N"/>
    <property type="match status" value="1"/>
</dbReference>
<dbReference type="SUPFAM" id="SSF54736">
    <property type="entry name" value="ClpS-like"/>
    <property type="match status" value="1"/>
</dbReference>
<dbReference type="SUPFAM" id="SSF48300">
    <property type="entry name" value="Ribosomal protein L7/12, oligomerisation (N-terminal) domain"/>
    <property type="match status" value="1"/>
</dbReference>
<gene>
    <name evidence="1" type="primary">rplL</name>
    <name type="ordered locus">HEAR3174</name>
</gene>
<evidence type="ECO:0000255" key="1">
    <source>
        <dbReference type="HAMAP-Rule" id="MF_00368"/>
    </source>
</evidence>
<evidence type="ECO:0000305" key="2"/>
<keyword id="KW-1185">Reference proteome</keyword>
<keyword id="KW-0687">Ribonucleoprotein</keyword>
<keyword id="KW-0689">Ribosomal protein</keyword>
<comment type="function">
    <text evidence="1">Forms part of the ribosomal stalk which helps the ribosome interact with GTP-bound translation factors. Is thus essential for accurate translation.</text>
</comment>
<comment type="subunit">
    <text evidence="1">Homodimer. Part of the ribosomal stalk of the 50S ribosomal subunit. Forms a multimeric L10(L12)X complex, where L10 forms an elongated spine to which 2 to 4 L12 dimers bind in a sequential fashion. Binds GTP-bound translation factors.</text>
</comment>
<comment type="similarity">
    <text evidence="1">Belongs to the bacterial ribosomal protein bL12 family.</text>
</comment>
<organism>
    <name type="scientific">Herminiimonas arsenicoxydans</name>
    <dbReference type="NCBI Taxonomy" id="204773"/>
    <lineage>
        <taxon>Bacteria</taxon>
        <taxon>Pseudomonadati</taxon>
        <taxon>Pseudomonadota</taxon>
        <taxon>Betaproteobacteria</taxon>
        <taxon>Burkholderiales</taxon>
        <taxon>Oxalobacteraceae</taxon>
        <taxon>Herminiimonas</taxon>
    </lineage>
</organism>